<gene>
    <name evidence="7" type="primary">PAPS3</name>
    <name evidence="9" type="ordered locus">At3g06560</name>
    <name evidence="10" type="ORF">F5E6.11</name>
</gene>
<keyword id="KW-0025">Alternative splicing</keyword>
<keyword id="KW-0067">ATP-binding</keyword>
<keyword id="KW-0460">Magnesium</keyword>
<keyword id="KW-0479">Metal-binding</keyword>
<keyword id="KW-0507">mRNA processing</keyword>
<keyword id="KW-0547">Nucleotide-binding</keyword>
<keyword id="KW-0548">Nucleotidyltransferase</keyword>
<keyword id="KW-0539">Nucleus</keyword>
<keyword id="KW-1185">Reference proteome</keyword>
<keyword id="KW-0808">Transferase</keyword>
<accession>Q56XM9</accession>
<accession>Q7XJ92</accession>
<accession>Q9C8Z7</accession>
<proteinExistence type="evidence at protein level"/>
<protein>
    <recommendedName>
        <fullName evidence="7">Nuclear poly(A) polymerase 3</fullName>
        <shortName evidence="8">PAP(III)</shortName>
        <shortName evidence="8">Poly(A) polymerase III</shortName>
        <ecNumber evidence="4">2.7.7.19</ecNumber>
    </recommendedName>
    <alternativeName>
        <fullName evidence="8">Polynucleotide adenylyltransferase 3</fullName>
    </alternativeName>
</protein>
<evidence type="ECO:0000250" key="1">
    <source>
        <dbReference type="UniProtKB" id="P25500"/>
    </source>
</evidence>
<evidence type="ECO:0000250" key="2">
    <source>
        <dbReference type="UniProtKB" id="P29468"/>
    </source>
</evidence>
<evidence type="ECO:0000255" key="3">
    <source>
        <dbReference type="PROSITE-ProRule" id="PRU00768"/>
    </source>
</evidence>
<evidence type="ECO:0000269" key="4">
    <source>
    </source>
</evidence>
<evidence type="ECO:0000269" key="5">
    <source>
    </source>
</evidence>
<evidence type="ECO:0000269" key="6">
    <source>
    </source>
</evidence>
<evidence type="ECO:0000303" key="7">
    <source>
    </source>
</evidence>
<evidence type="ECO:0000305" key="8"/>
<evidence type="ECO:0000312" key="9">
    <source>
        <dbReference type="Araport" id="AT3G06560"/>
    </source>
</evidence>
<evidence type="ECO:0000312" key="10">
    <source>
        <dbReference type="EMBL" id="AAG51325.1"/>
    </source>
</evidence>
<evidence type="ECO:0000312" key="11">
    <source>
        <dbReference type="EMBL" id="BAD95301.1"/>
    </source>
</evidence>
<reference key="1">
    <citation type="journal article" date="2004" name="Biochim. Biophys. Acta">
        <title>Novel alternative splicing of mRNAs encoding poly(A) polymerases in Arabidopsis.</title>
        <authorList>
            <person name="Addepalli B."/>
            <person name="Meeks L.R."/>
            <person name="Forbes K.P."/>
            <person name="Hunt A.G."/>
        </authorList>
    </citation>
    <scope>NUCLEOTIDE SEQUENCE [MRNA] (ISOFORM 2)</scope>
    <scope>ALTERNATIVE SPLICING</scope>
    <scope>FUNCTION</scope>
    <scope>CATALYTIC ACTIVITY</scope>
    <scope>TISSUE SPECIFICITY</scope>
    <scope>GENE FAMILY</scope>
    <scope>NOMENCLATURE</scope>
</reference>
<reference key="2">
    <citation type="journal article" date="2000" name="Nature">
        <title>Sequence and analysis of chromosome 3 of the plant Arabidopsis thaliana.</title>
        <authorList>
            <person name="Salanoubat M."/>
            <person name="Lemcke K."/>
            <person name="Rieger M."/>
            <person name="Ansorge W."/>
            <person name="Unseld M."/>
            <person name="Fartmann B."/>
            <person name="Valle G."/>
            <person name="Bloecker H."/>
            <person name="Perez-Alonso M."/>
            <person name="Obermaier B."/>
            <person name="Delseny M."/>
            <person name="Boutry M."/>
            <person name="Grivell L.A."/>
            <person name="Mache R."/>
            <person name="Puigdomenech P."/>
            <person name="De Simone V."/>
            <person name="Choisne N."/>
            <person name="Artiguenave F."/>
            <person name="Robert C."/>
            <person name="Brottier P."/>
            <person name="Wincker P."/>
            <person name="Cattolico L."/>
            <person name="Weissenbach J."/>
            <person name="Saurin W."/>
            <person name="Quetier F."/>
            <person name="Schaefer M."/>
            <person name="Mueller-Auer S."/>
            <person name="Gabel C."/>
            <person name="Fuchs M."/>
            <person name="Benes V."/>
            <person name="Wurmbach E."/>
            <person name="Drzonek H."/>
            <person name="Erfle H."/>
            <person name="Jordan N."/>
            <person name="Bangert S."/>
            <person name="Wiedelmann R."/>
            <person name="Kranz H."/>
            <person name="Voss H."/>
            <person name="Holland R."/>
            <person name="Brandt P."/>
            <person name="Nyakatura G."/>
            <person name="Vezzi A."/>
            <person name="D'Angelo M."/>
            <person name="Pallavicini A."/>
            <person name="Toppo S."/>
            <person name="Simionati B."/>
            <person name="Conrad A."/>
            <person name="Hornischer K."/>
            <person name="Kauer G."/>
            <person name="Loehnert T.-H."/>
            <person name="Nordsiek G."/>
            <person name="Reichelt J."/>
            <person name="Scharfe M."/>
            <person name="Schoen O."/>
            <person name="Bargues M."/>
            <person name="Terol J."/>
            <person name="Climent J."/>
            <person name="Navarro P."/>
            <person name="Collado C."/>
            <person name="Perez-Perez A."/>
            <person name="Ottenwaelder B."/>
            <person name="Duchemin D."/>
            <person name="Cooke R."/>
            <person name="Laudie M."/>
            <person name="Berger-Llauro C."/>
            <person name="Purnelle B."/>
            <person name="Masuy D."/>
            <person name="de Haan M."/>
            <person name="Maarse A.C."/>
            <person name="Alcaraz J.-P."/>
            <person name="Cottet A."/>
            <person name="Casacuberta E."/>
            <person name="Monfort A."/>
            <person name="Argiriou A."/>
            <person name="Flores M."/>
            <person name="Liguori R."/>
            <person name="Vitale D."/>
            <person name="Mannhaupt G."/>
            <person name="Haase D."/>
            <person name="Schoof H."/>
            <person name="Rudd S."/>
            <person name="Zaccaria P."/>
            <person name="Mewes H.-W."/>
            <person name="Mayer K.F.X."/>
            <person name="Kaul S."/>
            <person name="Town C.D."/>
            <person name="Koo H.L."/>
            <person name="Tallon L.J."/>
            <person name="Jenkins J."/>
            <person name="Rooney T."/>
            <person name="Rizzo M."/>
            <person name="Walts A."/>
            <person name="Utterback T."/>
            <person name="Fujii C.Y."/>
            <person name="Shea T.P."/>
            <person name="Creasy T.H."/>
            <person name="Haas B."/>
            <person name="Maiti R."/>
            <person name="Wu D."/>
            <person name="Peterson J."/>
            <person name="Van Aken S."/>
            <person name="Pai G."/>
            <person name="Militscher J."/>
            <person name="Sellers P."/>
            <person name="Gill J.E."/>
            <person name="Feldblyum T.V."/>
            <person name="Preuss D."/>
            <person name="Lin X."/>
            <person name="Nierman W.C."/>
            <person name="Salzberg S.L."/>
            <person name="White O."/>
            <person name="Venter J.C."/>
            <person name="Fraser C.M."/>
            <person name="Kaneko T."/>
            <person name="Nakamura Y."/>
            <person name="Sato S."/>
            <person name="Kato T."/>
            <person name="Asamizu E."/>
            <person name="Sasamoto S."/>
            <person name="Kimura T."/>
            <person name="Idesawa K."/>
            <person name="Kawashima K."/>
            <person name="Kishida Y."/>
            <person name="Kiyokawa C."/>
            <person name="Kohara M."/>
            <person name="Matsumoto M."/>
            <person name="Matsuno A."/>
            <person name="Muraki A."/>
            <person name="Nakayama S."/>
            <person name="Nakazaki N."/>
            <person name="Shinpo S."/>
            <person name="Takeuchi C."/>
            <person name="Wada T."/>
            <person name="Watanabe A."/>
            <person name="Yamada M."/>
            <person name="Yasuda M."/>
            <person name="Tabata S."/>
        </authorList>
    </citation>
    <scope>NUCLEOTIDE SEQUENCE [LARGE SCALE GENOMIC DNA]</scope>
    <source>
        <strain>cv. Columbia</strain>
    </source>
</reference>
<reference key="3">
    <citation type="journal article" date="2017" name="Plant J.">
        <title>Araport11: a complete reannotation of the Arabidopsis thaliana reference genome.</title>
        <authorList>
            <person name="Cheng C.Y."/>
            <person name="Krishnakumar V."/>
            <person name="Chan A.P."/>
            <person name="Thibaud-Nissen F."/>
            <person name="Schobel S."/>
            <person name="Town C.D."/>
        </authorList>
    </citation>
    <scope>GENOME REANNOTATION</scope>
    <source>
        <strain>cv. Columbia</strain>
    </source>
</reference>
<reference key="4">
    <citation type="submission" date="2005-03" db="EMBL/GenBank/DDBJ databases">
        <title>Large-scale analysis of RIKEN Arabidopsis full-length (RAFL) cDNAs.</title>
        <authorList>
            <person name="Totoki Y."/>
            <person name="Seki M."/>
            <person name="Ishida J."/>
            <person name="Nakajima M."/>
            <person name="Enju A."/>
            <person name="Kamiya A."/>
            <person name="Narusaka M."/>
            <person name="Shin-i T."/>
            <person name="Nakagawa M."/>
            <person name="Sakamoto N."/>
            <person name="Oishi K."/>
            <person name="Kohara Y."/>
            <person name="Kobayashi M."/>
            <person name="Toyoda A."/>
            <person name="Sakaki Y."/>
            <person name="Sakurai T."/>
            <person name="Iida K."/>
            <person name="Akiyama K."/>
            <person name="Satou M."/>
            <person name="Toyoda T."/>
            <person name="Konagaya A."/>
            <person name="Carninci P."/>
            <person name="Kawai J."/>
            <person name="Hayashizaki Y."/>
            <person name="Shinozaki K."/>
        </authorList>
    </citation>
    <scope>NUCLEOTIDE SEQUENCE [LARGE SCALE MRNA] (ISOFORM 1)</scope>
    <source>
        <strain>cv. Columbia</strain>
    </source>
</reference>
<reference key="5">
    <citation type="journal article" date="2008" name="BMC Genomics">
        <title>Arabidopsis mRNA polyadenylation machinery: comprehensive analysis of protein-protein interactions and gene expression profiling.</title>
        <authorList>
            <person name="Hunt A.G."/>
            <person name="Xu R."/>
            <person name="Addepalli B."/>
            <person name="Rao S."/>
            <person name="Forbes K.P."/>
            <person name="Meeks L.R."/>
            <person name="Xing D."/>
            <person name="Mo M."/>
            <person name="Zhao H."/>
            <person name="Bandyopadhyay A."/>
            <person name="Dampanaboina L."/>
            <person name="Marion A."/>
            <person name="Von Lanken C."/>
            <person name="Li Q.Q."/>
        </authorList>
    </citation>
    <scope>INTERACTION WITH FIPS5 AND CPSF30</scope>
    <scope>GENE FAMILY</scope>
    <scope>NOMENCLATURE</scope>
</reference>
<reference key="6">
    <citation type="journal article" date="2009" name="PLoS ONE">
        <title>Characterization of genes encoding poly(A) polymerases in plants: evidence for duplication and functional specialization.</title>
        <authorList>
            <person name="Meeks L.R."/>
            <person name="Addepalli B."/>
            <person name="Hunt A.G."/>
        </authorList>
    </citation>
    <scope>FUNCTION</scope>
    <scope>DISRUPTION PHENOTYPE</scope>
    <scope>SUBCELLULAR LOCATION</scope>
    <scope>TISSUE SPECIFICITY</scope>
</reference>
<comment type="function">
    <text evidence="1 4 6">Essential protein (PubMed:19956626). Polymerase that creates the 3'-poly(A) tail of mRNA's (PubMed:15297145). Also required for the endoribonucleolytic cleavage reaction at some polyadenylation sites. May acquire specificity through interaction with a cleavage and polyadenylation specificity factor (CPSF) at its C-terminus (By similarity).</text>
</comment>
<comment type="catalytic activity">
    <reaction evidence="4">
        <text>RNA(n) + ATP = RNA(n)-3'-adenine ribonucleotide + diphosphate</text>
        <dbReference type="Rhea" id="RHEA:11332"/>
        <dbReference type="Rhea" id="RHEA-COMP:14527"/>
        <dbReference type="Rhea" id="RHEA-COMP:17347"/>
        <dbReference type="ChEBI" id="CHEBI:30616"/>
        <dbReference type="ChEBI" id="CHEBI:33019"/>
        <dbReference type="ChEBI" id="CHEBI:140395"/>
        <dbReference type="ChEBI" id="CHEBI:173115"/>
        <dbReference type="EC" id="2.7.7.19"/>
    </reaction>
</comment>
<comment type="cofactor">
    <cofactor evidence="1">
        <name>Mg(2+)</name>
        <dbReference type="ChEBI" id="CHEBI:18420"/>
    </cofactor>
    <cofactor evidence="1">
        <name>Mn(2+)</name>
        <dbReference type="ChEBI" id="CHEBI:29035"/>
    </cofactor>
    <text evidence="1">Binds 2 magnesium ions. Also active with manganese.</text>
</comment>
<comment type="subunit">
    <text evidence="1 5">Monomer (By similarity). Forms a complex with cleavage and polyadenylation specificity factor (CPSF) subunits FIPS5 and CPSF30 (PubMed:18479511).</text>
</comment>
<comment type="subcellular location">
    <subcellularLocation>
        <location evidence="3 6">Nucleus</location>
    </subcellularLocation>
</comment>
<comment type="alternative products">
    <event type="alternative splicing"/>
    <isoform>
        <id>Q56XM9-1</id>
        <name>1</name>
        <sequence type="displayed"/>
    </isoform>
    <isoform>
        <id>Q56XM9-2</id>
        <name>2</name>
        <sequence type="described" ref="VSP_057245"/>
    </isoform>
</comment>
<comment type="tissue specificity">
    <text evidence="4 6">Expressed in leaves (mostly in petioles and tips), cotyledon, roots (tips, vascular tissue of the radicle, and throughout the root tissue excluding the elongation zone), stems, and flowers (restricted to the stigma and the pollen in mature anthers) (PubMed:15297145, PubMed:19956626). Active in the primary and secondary root systems (PubMed:19956626).</text>
</comment>
<comment type="disruption phenotype">
    <text evidence="6">Lethal.</text>
</comment>
<comment type="similarity">
    <text evidence="8">Belongs to the poly(A) polymerase family.</text>
</comment>
<sequence>MKKGGGRNKGFPQDDESSISLRQLMVNEGLIPSLEDEVKRRGVINQLRKIVVRWVKNVAWQHRLPQNQIDATNATILPYGSYGLGVYGSESDIDALCIGPFFASIAEDFFISLRDMLKSRREVSELHCVKDAKVPLIRFKFDGILVDLPYAQLRVLSIPNNVDVLNPFFLRDIDETSWKILSGVRANKCILQLVPSLELFQSLLRCVKLWAKRRGVYGNLNGFLGGVHMAILAAFVCGYQPNATLSSLLANFFYTFAHWQWPTPVVLLEDTYPSTGAPPGLMPIQLPCGSHQYCNSTITRSTFYKIVAEFLLGHNLTKDYLKLNFSWKDLFELYPYANTYTWFTKIHLSAANQEDLSDWVGWVKSRFRCLLIKIEEVYGICDPNPTEYVETYTKQPNIVFYWGLQLRTINVSDIESVKIDFLKNVNSGSFRGTVGRIQLTLVKASQLPKNGECGSNNRSKKVTKTCWRIREDKQCNNVPVYSKHLPGYVVGYQKMVNREADGMEVKC</sequence>
<feature type="chain" id="PRO_0000431347" description="Nuclear poly(A) polymerase 3">
    <location>
        <begin position="1"/>
        <end position="507"/>
    </location>
</feature>
<feature type="binding site" evidence="1">
    <location>
        <begin position="79"/>
        <end position="81"/>
    </location>
    <ligand>
        <name>ATP</name>
        <dbReference type="ChEBI" id="CHEBI:30616"/>
    </ligand>
</feature>
<feature type="binding site" evidence="2">
    <location>
        <begin position="91"/>
        <end position="94"/>
    </location>
    <ligand>
        <name>ATP</name>
        <dbReference type="ChEBI" id="CHEBI:30616"/>
    </ligand>
</feature>
<feature type="binding site" evidence="1">
    <location>
        <position position="92"/>
    </location>
    <ligand>
        <name>Mg(2+)</name>
        <dbReference type="ChEBI" id="CHEBI:18420"/>
        <label>1</label>
        <note>catalytic</note>
    </ligand>
</feature>
<feature type="binding site" evidence="1">
    <location>
        <position position="92"/>
    </location>
    <ligand>
        <name>Mg(2+)</name>
        <dbReference type="ChEBI" id="CHEBI:18420"/>
        <label>2</label>
        <note>catalytic</note>
    </ligand>
</feature>
<feature type="binding site" evidence="1">
    <location>
        <position position="94"/>
    </location>
    <ligand>
        <name>Mg(2+)</name>
        <dbReference type="ChEBI" id="CHEBI:18420"/>
        <label>1</label>
        <note>catalytic</note>
    </ligand>
</feature>
<feature type="binding site" evidence="1">
    <location>
        <position position="94"/>
    </location>
    <ligand>
        <name>Mg(2+)</name>
        <dbReference type="ChEBI" id="CHEBI:18420"/>
        <label>2</label>
        <note>catalytic</note>
    </ligand>
</feature>
<feature type="binding site" evidence="1">
    <location>
        <position position="147"/>
    </location>
    <ligand>
        <name>ATP</name>
        <dbReference type="ChEBI" id="CHEBI:30616"/>
    </ligand>
</feature>
<feature type="binding site" evidence="1">
    <location>
        <position position="147"/>
    </location>
    <ligand>
        <name>Mg(2+)</name>
        <dbReference type="ChEBI" id="CHEBI:18420"/>
        <label>2</label>
        <note>catalytic</note>
    </ligand>
</feature>
<feature type="binding site" evidence="1">
    <location>
        <position position="208"/>
    </location>
    <ligand>
        <name>ATP</name>
        <dbReference type="ChEBI" id="CHEBI:30616"/>
    </ligand>
</feature>
<feature type="binding site" evidence="1">
    <location>
        <position position="217"/>
    </location>
    <ligand>
        <name>ATP</name>
        <dbReference type="ChEBI" id="CHEBI:30616"/>
    </ligand>
</feature>
<feature type="binding site" evidence="1">
    <location>
        <begin position="226"/>
        <end position="227"/>
    </location>
    <ligand>
        <name>ATP</name>
        <dbReference type="ChEBI" id="CHEBI:30616"/>
    </ligand>
</feature>
<feature type="site" description="Interaction with RNA" evidence="2">
    <location>
        <position position="368"/>
    </location>
</feature>
<feature type="site" description="Interaction with RNA" evidence="2">
    <location>
        <position position="373"/>
    </location>
</feature>
<feature type="splice variant" id="VSP_057245" description="In isoform 2.">
    <location>
        <begin position="1"/>
        <end position="24"/>
    </location>
</feature>
<feature type="sequence conflict" description="In Ref. 2; AAG51325." ref="2">
    <location>
        <position position="107"/>
    </location>
</feature>
<feature type="sequence conflict" description="In Ref. 1; AAP86215." ref="1">
    <original>I</original>
    <variation>S</variation>
    <location>
        <position position="180"/>
    </location>
</feature>
<feature type="sequence conflict" description="In Ref. 1; AAP86215." ref="1">
    <original>H</original>
    <variation>L</variation>
    <location>
        <position position="258"/>
    </location>
</feature>
<organism evidence="11">
    <name type="scientific">Arabidopsis thaliana</name>
    <name type="common">Mouse-ear cress</name>
    <dbReference type="NCBI Taxonomy" id="3702"/>
    <lineage>
        <taxon>Eukaryota</taxon>
        <taxon>Viridiplantae</taxon>
        <taxon>Streptophyta</taxon>
        <taxon>Embryophyta</taxon>
        <taxon>Tracheophyta</taxon>
        <taxon>Spermatophyta</taxon>
        <taxon>Magnoliopsida</taxon>
        <taxon>eudicotyledons</taxon>
        <taxon>Gunneridae</taxon>
        <taxon>Pentapetalae</taxon>
        <taxon>rosids</taxon>
        <taxon>malvids</taxon>
        <taxon>Brassicales</taxon>
        <taxon>Brassicaceae</taxon>
        <taxon>Camelineae</taxon>
        <taxon>Arabidopsis</taxon>
    </lineage>
</organism>
<dbReference type="EC" id="2.7.7.19" evidence="4"/>
<dbReference type="EMBL" id="AY323907">
    <property type="protein sequence ID" value="AAP86215.1"/>
    <property type="molecule type" value="mRNA"/>
</dbReference>
<dbReference type="EMBL" id="AC020580">
    <property type="protein sequence ID" value="AAG51325.1"/>
    <property type="molecule type" value="Genomic_DNA"/>
</dbReference>
<dbReference type="EMBL" id="CP002686">
    <property type="protein sequence ID" value="AEE74415.1"/>
    <property type="molecule type" value="Genomic_DNA"/>
</dbReference>
<dbReference type="EMBL" id="AK221644">
    <property type="protein sequence ID" value="BAD95301.1"/>
    <property type="molecule type" value="mRNA"/>
</dbReference>
<dbReference type="RefSeq" id="NP_187308.3">
    <molecule id="Q56XM9-1"/>
    <property type="nucleotide sequence ID" value="NM_111532.3"/>
</dbReference>
<dbReference type="SMR" id="Q56XM9"/>
<dbReference type="BioGRID" id="5170">
    <property type="interactions" value="3"/>
</dbReference>
<dbReference type="FunCoup" id="Q56XM9">
    <property type="interactions" value="1"/>
</dbReference>
<dbReference type="IntAct" id="Q56XM9">
    <property type="interactions" value="4"/>
</dbReference>
<dbReference type="STRING" id="3702.Q56XM9"/>
<dbReference type="iPTMnet" id="Q56XM9"/>
<dbReference type="PaxDb" id="3702-AT3G06560.1"/>
<dbReference type="ProteomicsDB" id="236353">
    <molecule id="Q56XM9-1"/>
</dbReference>
<dbReference type="EnsemblPlants" id="AT3G06560.1">
    <molecule id="Q56XM9-1"/>
    <property type="protein sequence ID" value="AT3G06560.1"/>
    <property type="gene ID" value="AT3G06560"/>
</dbReference>
<dbReference type="GeneID" id="819835"/>
<dbReference type="Gramene" id="AT3G06560.1">
    <molecule id="Q56XM9-1"/>
    <property type="protein sequence ID" value="AT3G06560.1"/>
    <property type="gene ID" value="AT3G06560"/>
</dbReference>
<dbReference type="KEGG" id="ath:AT3G06560"/>
<dbReference type="Araport" id="AT3G06560"/>
<dbReference type="TAIR" id="AT3G06560">
    <property type="gene designation" value="PAPS3"/>
</dbReference>
<dbReference type="eggNOG" id="KOG2245">
    <property type="taxonomic scope" value="Eukaryota"/>
</dbReference>
<dbReference type="HOGENOM" id="CLU_011511_6_0_1"/>
<dbReference type="InParanoid" id="Q56XM9"/>
<dbReference type="OMA" id="RMDEERT"/>
<dbReference type="PhylomeDB" id="Q56XM9"/>
<dbReference type="BRENDA" id="2.7.7.19">
    <property type="organism ID" value="399"/>
</dbReference>
<dbReference type="PRO" id="PR:Q56XM9"/>
<dbReference type="Proteomes" id="UP000006548">
    <property type="component" value="Chromosome 3"/>
</dbReference>
<dbReference type="ExpressionAtlas" id="Q56XM9">
    <property type="expression patterns" value="baseline and differential"/>
</dbReference>
<dbReference type="GO" id="GO:0005737">
    <property type="term" value="C:cytoplasm"/>
    <property type="evidence" value="ECO:0000314"/>
    <property type="project" value="TAIR"/>
</dbReference>
<dbReference type="GO" id="GO:0005634">
    <property type="term" value="C:nucleus"/>
    <property type="evidence" value="ECO:0007669"/>
    <property type="project" value="UniProtKB-SubCell"/>
</dbReference>
<dbReference type="GO" id="GO:0005524">
    <property type="term" value="F:ATP binding"/>
    <property type="evidence" value="ECO:0007669"/>
    <property type="project" value="UniProtKB-KW"/>
</dbReference>
<dbReference type="GO" id="GO:0046872">
    <property type="term" value="F:metal ion binding"/>
    <property type="evidence" value="ECO:0007669"/>
    <property type="project" value="UniProtKB-KW"/>
</dbReference>
<dbReference type="GO" id="GO:1990817">
    <property type="term" value="F:poly(A) RNA polymerase activity"/>
    <property type="evidence" value="ECO:0007669"/>
    <property type="project" value="UniProtKB-EC"/>
</dbReference>
<dbReference type="GO" id="GO:0003723">
    <property type="term" value="F:RNA binding"/>
    <property type="evidence" value="ECO:0007669"/>
    <property type="project" value="InterPro"/>
</dbReference>
<dbReference type="GO" id="GO:0006397">
    <property type="term" value="P:mRNA processing"/>
    <property type="evidence" value="ECO:0007669"/>
    <property type="project" value="UniProtKB-KW"/>
</dbReference>
<dbReference type="GO" id="GO:0031123">
    <property type="term" value="P:RNA 3'-end processing"/>
    <property type="evidence" value="ECO:0007669"/>
    <property type="project" value="InterPro"/>
</dbReference>
<dbReference type="CDD" id="cd05402">
    <property type="entry name" value="NT_PAP_TUTase"/>
    <property type="match status" value="1"/>
</dbReference>
<dbReference type="FunFam" id="3.30.70.590:FF:000005">
    <property type="entry name" value="Nuclear poly(A) polymerase 3"/>
    <property type="match status" value="1"/>
</dbReference>
<dbReference type="FunFam" id="3.30.460.10:FF:000002">
    <property type="entry name" value="Poly(A) polymerase alpha, putative"/>
    <property type="match status" value="1"/>
</dbReference>
<dbReference type="Gene3D" id="1.10.1410.10">
    <property type="match status" value="1"/>
</dbReference>
<dbReference type="Gene3D" id="3.30.460.10">
    <property type="entry name" value="Beta Polymerase, domain 2"/>
    <property type="match status" value="1"/>
</dbReference>
<dbReference type="Gene3D" id="3.30.70.590">
    <property type="entry name" value="Poly(A) polymerase predicted RNA binding domain"/>
    <property type="match status" value="1"/>
</dbReference>
<dbReference type="InterPro" id="IPR043519">
    <property type="entry name" value="NT_sf"/>
</dbReference>
<dbReference type="InterPro" id="IPR011068">
    <property type="entry name" value="NuclTrfase_I-like_C"/>
</dbReference>
<dbReference type="InterPro" id="IPR007012">
    <property type="entry name" value="PolA_pol_cen_dom"/>
</dbReference>
<dbReference type="InterPro" id="IPR048840">
    <property type="entry name" value="PolA_pol_NTPase"/>
</dbReference>
<dbReference type="InterPro" id="IPR014492">
    <property type="entry name" value="PolyA_polymerase"/>
</dbReference>
<dbReference type="PANTHER" id="PTHR10682:SF33">
    <property type="entry name" value="NUCLEAR POLY(A) POLYMERASE 3"/>
    <property type="match status" value="1"/>
</dbReference>
<dbReference type="PANTHER" id="PTHR10682">
    <property type="entry name" value="POLY A POLYMERASE"/>
    <property type="match status" value="1"/>
</dbReference>
<dbReference type="Pfam" id="PF04928">
    <property type="entry name" value="PAP_central"/>
    <property type="match status" value="1"/>
</dbReference>
<dbReference type="Pfam" id="PF20750">
    <property type="entry name" value="PAP_NTPase"/>
    <property type="match status" value="1"/>
</dbReference>
<dbReference type="PIRSF" id="PIRSF018425">
    <property type="entry name" value="PolyA_polymerase"/>
    <property type="match status" value="1"/>
</dbReference>
<dbReference type="SUPFAM" id="SSF81301">
    <property type="entry name" value="Nucleotidyltransferase"/>
    <property type="match status" value="1"/>
</dbReference>
<dbReference type="SUPFAM" id="SSF55003">
    <property type="entry name" value="PAP/Archaeal CCA-adding enzyme, C-terminal domain"/>
    <property type="match status" value="1"/>
</dbReference>
<dbReference type="SUPFAM" id="SSF81631">
    <property type="entry name" value="PAP/OAS1 substrate-binding domain"/>
    <property type="match status" value="1"/>
</dbReference>
<name>PAPS3_ARATH</name>